<protein>
    <recommendedName>
        <fullName evidence="1">Na(+)-translocating NADH-quinone reductase subunit F</fullName>
        <shortName evidence="1">Na(+)-NQR subunit F</shortName>
        <shortName evidence="1">Na(+)-translocating NQR subunit F</shortName>
        <ecNumber evidence="1">7.2.1.1</ecNumber>
    </recommendedName>
    <alternativeName>
        <fullName evidence="1">NQR complex subunit F</fullName>
    </alternativeName>
    <alternativeName>
        <fullName evidence="1">NQR-1 subunit F</fullName>
    </alternativeName>
</protein>
<accession>Q605A0</accession>
<evidence type="ECO:0000255" key="1">
    <source>
        <dbReference type="HAMAP-Rule" id="MF_00430"/>
    </source>
</evidence>
<organism>
    <name type="scientific">Methylococcus capsulatus (strain ATCC 33009 / NCIMB 11132 / Bath)</name>
    <dbReference type="NCBI Taxonomy" id="243233"/>
    <lineage>
        <taxon>Bacteria</taxon>
        <taxon>Pseudomonadati</taxon>
        <taxon>Pseudomonadota</taxon>
        <taxon>Gammaproteobacteria</taxon>
        <taxon>Methylococcales</taxon>
        <taxon>Methylococcaceae</taxon>
        <taxon>Methylococcus</taxon>
    </lineage>
</organism>
<reference key="1">
    <citation type="journal article" date="2004" name="PLoS Biol.">
        <title>Genomic insights into methanotrophy: the complete genome sequence of Methylococcus capsulatus (Bath).</title>
        <authorList>
            <person name="Ward N.L."/>
            <person name="Larsen O."/>
            <person name="Sakwa J."/>
            <person name="Bruseth L."/>
            <person name="Khouri H.M."/>
            <person name="Durkin A.S."/>
            <person name="Dimitrov G."/>
            <person name="Jiang L."/>
            <person name="Scanlan D."/>
            <person name="Kang K.H."/>
            <person name="Lewis M.R."/>
            <person name="Nelson K.E."/>
            <person name="Methe B.A."/>
            <person name="Wu M."/>
            <person name="Heidelberg J.F."/>
            <person name="Paulsen I.T."/>
            <person name="Fouts D.E."/>
            <person name="Ravel J."/>
            <person name="Tettelin H."/>
            <person name="Ren Q."/>
            <person name="Read T.D."/>
            <person name="DeBoy R.T."/>
            <person name="Seshadri R."/>
            <person name="Salzberg S.L."/>
            <person name="Jensen H.B."/>
            <person name="Birkeland N.K."/>
            <person name="Nelson W.C."/>
            <person name="Dodson R.J."/>
            <person name="Grindhaug S.H."/>
            <person name="Holt I.E."/>
            <person name="Eidhammer I."/>
            <person name="Jonasen I."/>
            <person name="Vanaken S."/>
            <person name="Utterback T.R."/>
            <person name="Feldblyum T.V."/>
            <person name="Fraser C.M."/>
            <person name="Lillehaug J.R."/>
            <person name="Eisen J.A."/>
        </authorList>
    </citation>
    <scope>NUCLEOTIDE SEQUENCE [LARGE SCALE GENOMIC DNA]</scope>
    <source>
        <strain>ATCC 33009 / NCIMB 11132 / Bath</strain>
    </source>
</reference>
<gene>
    <name evidence="1" type="primary">nqrF</name>
    <name type="ordered locus">MCA2384</name>
</gene>
<dbReference type="EC" id="7.2.1.1" evidence="1"/>
<dbReference type="EMBL" id="AE017282">
    <property type="protein sequence ID" value="AAU91571.1"/>
    <property type="molecule type" value="Genomic_DNA"/>
</dbReference>
<dbReference type="RefSeq" id="WP_010961611.1">
    <property type="nucleotide sequence ID" value="NC_002977.6"/>
</dbReference>
<dbReference type="SMR" id="Q605A0"/>
<dbReference type="STRING" id="243233.MCA2384"/>
<dbReference type="GeneID" id="88224588"/>
<dbReference type="KEGG" id="mca:MCA2384"/>
<dbReference type="eggNOG" id="COG2871">
    <property type="taxonomic scope" value="Bacteria"/>
</dbReference>
<dbReference type="HOGENOM" id="CLU_003827_7_2_6"/>
<dbReference type="Proteomes" id="UP000006821">
    <property type="component" value="Chromosome"/>
</dbReference>
<dbReference type="GO" id="GO:0005886">
    <property type="term" value="C:plasma membrane"/>
    <property type="evidence" value="ECO:0007669"/>
    <property type="project" value="UniProtKB-SubCell"/>
</dbReference>
<dbReference type="GO" id="GO:0051537">
    <property type="term" value="F:2 iron, 2 sulfur cluster binding"/>
    <property type="evidence" value="ECO:0007669"/>
    <property type="project" value="UniProtKB-KW"/>
</dbReference>
<dbReference type="GO" id="GO:0009055">
    <property type="term" value="F:electron transfer activity"/>
    <property type="evidence" value="ECO:0007669"/>
    <property type="project" value="UniProtKB-UniRule"/>
</dbReference>
<dbReference type="GO" id="GO:0046872">
    <property type="term" value="F:metal ion binding"/>
    <property type="evidence" value="ECO:0007669"/>
    <property type="project" value="UniProtKB-KW"/>
</dbReference>
<dbReference type="GO" id="GO:0016655">
    <property type="term" value="F:oxidoreductase activity, acting on NAD(P)H, quinone or similar compound as acceptor"/>
    <property type="evidence" value="ECO:0007669"/>
    <property type="project" value="InterPro"/>
</dbReference>
<dbReference type="GO" id="GO:0006814">
    <property type="term" value="P:sodium ion transport"/>
    <property type="evidence" value="ECO:0007669"/>
    <property type="project" value="UniProtKB-UniRule"/>
</dbReference>
<dbReference type="CDD" id="cd00207">
    <property type="entry name" value="fer2"/>
    <property type="match status" value="1"/>
</dbReference>
<dbReference type="CDD" id="cd06188">
    <property type="entry name" value="NADH_quinone_reductase"/>
    <property type="match status" value="1"/>
</dbReference>
<dbReference type="FunFam" id="3.40.50.80:FF:000014">
    <property type="entry name" value="Na(+)-translocating NADH-quinone reductase subunit F"/>
    <property type="match status" value="1"/>
</dbReference>
<dbReference type="Gene3D" id="3.10.20.30">
    <property type="match status" value="1"/>
</dbReference>
<dbReference type="Gene3D" id="3.40.50.80">
    <property type="entry name" value="Nucleotide-binding domain of ferredoxin-NADP reductase (FNR) module"/>
    <property type="match status" value="1"/>
</dbReference>
<dbReference type="Gene3D" id="2.40.30.10">
    <property type="entry name" value="Translation factors"/>
    <property type="match status" value="1"/>
</dbReference>
<dbReference type="HAMAP" id="MF_00430">
    <property type="entry name" value="NqrF"/>
    <property type="match status" value="1"/>
</dbReference>
<dbReference type="InterPro" id="IPR036010">
    <property type="entry name" value="2Fe-2S_ferredoxin-like_sf"/>
</dbReference>
<dbReference type="InterPro" id="IPR001041">
    <property type="entry name" value="2Fe-2S_ferredoxin-type"/>
</dbReference>
<dbReference type="InterPro" id="IPR012675">
    <property type="entry name" value="Beta-grasp_dom_sf"/>
</dbReference>
<dbReference type="InterPro" id="IPR008333">
    <property type="entry name" value="Cbr1-like_FAD-bd_dom"/>
</dbReference>
<dbReference type="InterPro" id="IPR017927">
    <property type="entry name" value="FAD-bd_FR_type"/>
</dbReference>
<dbReference type="InterPro" id="IPR001709">
    <property type="entry name" value="Flavoprot_Pyr_Nucl_cyt_Rdtase"/>
</dbReference>
<dbReference type="InterPro" id="IPR039261">
    <property type="entry name" value="FNR_nucleotide-bd"/>
</dbReference>
<dbReference type="InterPro" id="IPR010205">
    <property type="entry name" value="NqrF"/>
</dbReference>
<dbReference type="InterPro" id="IPR001433">
    <property type="entry name" value="OxRdtase_FAD/NAD-bd"/>
</dbReference>
<dbReference type="InterPro" id="IPR017938">
    <property type="entry name" value="Riboflavin_synthase-like_b-brl"/>
</dbReference>
<dbReference type="NCBIfam" id="TIGR01941">
    <property type="entry name" value="nqrF"/>
    <property type="match status" value="1"/>
</dbReference>
<dbReference type="PANTHER" id="PTHR43644">
    <property type="entry name" value="NA(+)-TRANSLOCATING NADH-QUINONE REDUCTASE SUBUNIT"/>
    <property type="match status" value="1"/>
</dbReference>
<dbReference type="PANTHER" id="PTHR43644:SF1">
    <property type="entry name" value="NAD(P)H-FLAVIN REDUCTASE"/>
    <property type="match status" value="1"/>
</dbReference>
<dbReference type="Pfam" id="PF00970">
    <property type="entry name" value="FAD_binding_6"/>
    <property type="match status" value="1"/>
</dbReference>
<dbReference type="Pfam" id="PF00111">
    <property type="entry name" value="Fer2"/>
    <property type="match status" value="1"/>
</dbReference>
<dbReference type="Pfam" id="PF00175">
    <property type="entry name" value="NAD_binding_1"/>
    <property type="match status" value="1"/>
</dbReference>
<dbReference type="PIRSF" id="PIRSF000044">
    <property type="entry name" value="Cis_Diol_DH_RD"/>
    <property type="match status" value="1"/>
</dbReference>
<dbReference type="PRINTS" id="PR00371">
    <property type="entry name" value="FPNCR"/>
</dbReference>
<dbReference type="SUPFAM" id="SSF54292">
    <property type="entry name" value="2Fe-2S ferredoxin-like"/>
    <property type="match status" value="1"/>
</dbReference>
<dbReference type="SUPFAM" id="SSF52343">
    <property type="entry name" value="Ferredoxin reductase-like, C-terminal NADP-linked domain"/>
    <property type="match status" value="1"/>
</dbReference>
<dbReference type="SUPFAM" id="SSF63380">
    <property type="entry name" value="Riboflavin synthase domain-like"/>
    <property type="match status" value="1"/>
</dbReference>
<dbReference type="PROSITE" id="PS51085">
    <property type="entry name" value="2FE2S_FER_2"/>
    <property type="match status" value="1"/>
</dbReference>
<dbReference type="PROSITE" id="PS51384">
    <property type="entry name" value="FAD_FR"/>
    <property type="match status" value="1"/>
</dbReference>
<proteinExistence type="inferred from homology"/>
<name>NQRF_METCA</name>
<keyword id="KW-0001">2Fe-2S</keyword>
<keyword id="KW-0997">Cell inner membrane</keyword>
<keyword id="KW-1003">Cell membrane</keyword>
<keyword id="KW-0274">FAD</keyword>
<keyword id="KW-0285">Flavoprotein</keyword>
<keyword id="KW-0406">Ion transport</keyword>
<keyword id="KW-0408">Iron</keyword>
<keyword id="KW-0411">Iron-sulfur</keyword>
<keyword id="KW-0472">Membrane</keyword>
<keyword id="KW-0479">Metal-binding</keyword>
<keyword id="KW-0520">NAD</keyword>
<keyword id="KW-1185">Reference proteome</keyword>
<keyword id="KW-0915">Sodium</keyword>
<keyword id="KW-0739">Sodium transport</keyword>
<keyword id="KW-1278">Translocase</keyword>
<keyword id="KW-0812">Transmembrane</keyword>
<keyword id="KW-1133">Transmembrane helix</keyword>
<keyword id="KW-0813">Transport</keyword>
<keyword id="KW-0830">Ubiquinone</keyword>
<comment type="function">
    <text evidence="1">NQR complex catalyzes the reduction of ubiquinone-1 to ubiquinol by two successive reactions, coupled with the transport of Na(+) ions from the cytoplasm to the periplasm. The first step is catalyzed by NqrF, which accepts electrons from NADH and reduces ubiquinone-1 to ubisemiquinone by a one-electron transfer pathway.</text>
</comment>
<comment type="catalytic activity">
    <reaction evidence="1">
        <text>a ubiquinone + n Na(+)(in) + NADH + H(+) = a ubiquinol + n Na(+)(out) + NAD(+)</text>
        <dbReference type="Rhea" id="RHEA:47748"/>
        <dbReference type="Rhea" id="RHEA-COMP:9565"/>
        <dbReference type="Rhea" id="RHEA-COMP:9566"/>
        <dbReference type="ChEBI" id="CHEBI:15378"/>
        <dbReference type="ChEBI" id="CHEBI:16389"/>
        <dbReference type="ChEBI" id="CHEBI:17976"/>
        <dbReference type="ChEBI" id="CHEBI:29101"/>
        <dbReference type="ChEBI" id="CHEBI:57540"/>
        <dbReference type="ChEBI" id="CHEBI:57945"/>
        <dbReference type="EC" id="7.2.1.1"/>
    </reaction>
</comment>
<comment type="cofactor">
    <cofactor evidence="1">
        <name>[2Fe-2S] cluster</name>
        <dbReference type="ChEBI" id="CHEBI:190135"/>
    </cofactor>
    <text evidence="1">Binds 1 [2Fe-2S] cluster.</text>
</comment>
<comment type="cofactor">
    <cofactor evidence="1">
        <name>FAD</name>
        <dbReference type="ChEBI" id="CHEBI:57692"/>
    </cofactor>
</comment>
<comment type="subunit">
    <text evidence="1">Composed of six subunits; NqrA, NqrB, NqrC, NqrD, NqrE and NqrF.</text>
</comment>
<comment type="subcellular location">
    <subcellularLocation>
        <location evidence="1">Cell inner membrane</location>
        <topology evidence="1">Single-pass membrane protein</topology>
    </subcellularLocation>
</comment>
<comment type="similarity">
    <text evidence="1">Belongs to the NqrF family.</text>
</comment>
<feature type="chain" id="PRO_1000080584" description="Na(+)-translocating NADH-quinone reductase subunit F">
    <location>
        <begin position="1"/>
        <end position="407"/>
    </location>
</feature>
<feature type="transmembrane region" description="Helical" evidence="1">
    <location>
        <begin position="4"/>
        <end position="24"/>
    </location>
</feature>
<feature type="domain" description="2Fe-2S ferredoxin-type" evidence="1">
    <location>
        <begin position="33"/>
        <end position="125"/>
    </location>
</feature>
<feature type="domain" description="FAD-binding FR-type" evidence="1">
    <location>
        <begin position="128"/>
        <end position="269"/>
    </location>
</feature>
<feature type="binding site" evidence="1">
    <location>
        <position position="68"/>
    </location>
    <ligand>
        <name>[2Fe-2S] cluster</name>
        <dbReference type="ChEBI" id="CHEBI:190135"/>
    </ligand>
</feature>
<feature type="binding site" evidence="1">
    <location>
        <position position="74"/>
    </location>
    <ligand>
        <name>[2Fe-2S] cluster</name>
        <dbReference type="ChEBI" id="CHEBI:190135"/>
    </ligand>
</feature>
<feature type="binding site" evidence="1">
    <location>
        <position position="77"/>
    </location>
    <ligand>
        <name>[2Fe-2S] cluster</name>
        <dbReference type="ChEBI" id="CHEBI:190135"/>
    </ligand>
</feature>
<feature type="binding site" evidence="1">
    <location>
        <position position="109"/>
    </location>
    <ligand>
        <name>[2Fe-2S] cluster</name>
        <dbReference type="ChEBI" id="CHEBI:190135"/>
    </ligand>
</feature>
<sequence length="407" mass="45640">MLEIILGVFFFTAIVVALVFVILGAKSKLVAEGNVEVLINGERTIHVPIGSKLLTALADNNLFVSSACGGGGTCAQCRVQVLEGGGEILPTELSHITKREAAQGDRLSCQVTVKQNMKIHVHEEVFGVKKWECTVRSNRNVATFIKELVLELPAGENVDFRAGGYIQIECPPYDCKFSDFAIEPEYREDWDKYDLWKIESHVKAPAIRAYSMANYPEEKGIIMLNVRIATPPWGKEGTVPPGVMSSYIFNLKPGDKVTISGPFGEFFARDTDKEMVFIGGGAGMAPMRSHIFDQLLRLKSKRKMTFWYGARSLREAFYVEEFDRLQAENPNFKWFLGLSDPKPEDGWTGYTGFIHNILYEQYLKNHPAPEDCEYYMCGPPMMNSAVIQMLLDIGVDRENIMLDDFGG</sequence>